<organism>
    <name type="scientific">Mus musculus</name>
    <name type="common">Mouse</name>
    <dbReference type="NCBI Taxonomy" id="10090"/>
    <lineage>
        <taxon>Eukaryota</taxon>
        <taxon>Metazoa</taxon>
        <taxon>Chordata</taxon>
        <taxon>Craniata</taxon>
        <taxon>Vertebrata</taxon>
        <taxon>Euteleostomi</taxon>
        <taxon>Mammalia</taxon>
        <taxon>Eutheria</taxon>
        <taxon>Euarchontoglires</taxon>
        <taxon>Glires</taxon>
        <taxon>Rodentia</taxon>
        <taxon>Myomorpha</taxon>
        <taxon>Muroidea</taxon>
        <taxon>Muridae</taxon>
        <taxon>Murinae</taxon>
        <taxon>Mus</taxon>
        <taxon>Mus</taxon>
    </lineage>
</organism>
<comment type="function">
    <text evidence="1">GTPase-activating protein for Rho family members.</text>
</comment>
<comment type="subunit">
    <text evidence="1">May interact with RASA1/p120GAP.</text>
</comment>
<comment type="subcellular location">
    <subcellularLocation>
        <location evidence="1">Cytoplasm</location>
    </subcellularLocation>
    <subcellularLocation>
        <location evidence="1">Cell membrane</location>
        <topology evidence="1">Peripheral membrane protein</topology>
    </subcellularLocation>
    <text evidence="1">Also membrane-associated in a fibrillar pattern that colocalizes with the alpha5-beta1 integrin receptor (ITGA5/ITGB1) for fibronectin.</text>
</comment>
<comment type="tissue specificity">
    <text evidence="7">Expressed in spinal cord, cerebellum, kidney, testis and lung.</text>
</comment>
<comment type="domain">
    <text evidence="1">The pG1 pseudoGTPase domain does not bind GTP.</text>
</comment>
<dbReference type="EMBL" id="U67160">
    <property type="protein sequence ID" value="AAD12768.1"/>
    <property type="molecule type" value="Genomic_DNA"/>
</dbReference>
<dbReference type="EMBL" id="AC114002">
    <property type="status" value="NOT_ANNOTATED_CDS"/>
    <property type="molecule type" value="Genomic_DNA"/>
</dbReference>
<dbReference type="EMBL" id="AC155819">
    <property type="status" value="NOT_ANNOTATED_CDS"/>
    <property type="molecule type" value="Genomic_DNA"/>
</dbReference>
<dbReference type="EMBL" id="AK041016">
    <property type="status" value="NOT_ANNOTATED_CDS"/>
    <property type="molecule type" value="mRNA"/>
</dbReference>
<dbReference type="CCDS" id="CCDS36443.1"/>
<dbReference type="PIR" id="T42724">
    <property type="entry name" value="T42724"/>
</dbReference>
<dbReference type="RefSeq" id="NP_001395650.1">
    <property type="nucleotide sequence ID" value="NM_001408721.1"/>
</dbReference>
<dbReference type="RefSeq" id="NP_001395651.1">
    <property type="nucleotide sequence ID" value="NM_001408722.1"/>
</dbReference>
<dbReference type="RefSeq" id="NP_033836.2">
    <property type="nucleotide sequence ID" value="NM_009706.3"/>
</dbReference>
<dbReference type="RefSeq" id="XP_006515501.1">
    <property type="nucleotide sequence ID" value="XM_006515438.3"/>
</dbReference>
<dbReference type="RefSeq" id="XP_011242291.1">
    <property type="nucleotide sequence ID" value="XM_011243989.1"/>
</dbReference>
<dbReference type="RefSeq" id="XP_011242292.1">
    <property type="nucleotide sequence ID" value="XM_011243990.1"/>
</dbReference>
<dbReference type="BMRB" id="P97393"/>
<dbReference type="SMR" id="P97393"/>
<dbReference type="FunCoup" id="P97393">
    <property type="interactions" value="3057"/>
</dbReference>
<dbReference type="IntAct" id="P97393">
    <property type="interactions" value="3"/>
</dbReference>
<dbReference type="MINT" id="P97393"/>
<dbReference type="STRING" id="10090.ENSMUSP00000151809"/>
<dbReference type="GlyGen" id="P97393">
    <property type="glycosylation" value="2 sites, 1 N-linked glycan (1 site)"/>
</dbReference>
<dbReference type="iPTMnet" id="P97393"/>
<dbReference type="PhosphoSitePlus" id="P97393"/>
<dbReference type="jPOST" id="P97393"/>
<dbReference type="PaxDb" id="10090-ENSMUSP00000106353"/>
<dbReference type="PeptideAtlas" id="P97393"/>
<dbReference type="ProteomicsDB" id="253274"/>
<dbReference type="ProteomicsDB" id="338820"/>
<dbReference type="Pumba" id="P97393"/>
<dbReference type="Antibodypedia" id="23106">
    <property type="antibodies" value="158 antibodies from 28 providers"/>
</dbReference>
<dbReference type="DNASU" id="11855"/>
<dbReference type="Ensembl" id="ENSMUST00000110725.2">
    <property type="protein sequence ID" value="ENSMUSP00000106353.2"/>
    <property type="gene ID" value="ENSMUSG00000035133.10"/>
</dbReference>
<dbReference type="Ensembl" id="ENSMUST00000219443.2">
    <property type="protein sequence ID" value="ENSMUSP00000151809.2"/>
    <property type="gene ID" value="ENSMUSG00000035133.10"/>
</dbReference>
<dbReference type="GeneID" id="11855"/>
<dbReference type="KEGG" id="mmu:11855"/>
<dbReference type="AGR" id="MGI:1332637"/>
<dbReference type="CTD" id="394"/>
<dbReference type="MGI" id="MGI:1332637">
    <property type="gene designation" value="Arhgap5"/>
</dbReference>
<dbReference type="VEuPathDB" id="HostDB:ENSMUSG00000035133"/>
<dbReference type="eggNOG" id="KOG4271">
    <property type="taxonomic scope" value="Eukaryota"/>
</dbReference>
<dbReference type="GeneTree" id="ENSGT00940000154553"/>
<dbReference type="HOGENOM" id="CLU_004268_0_0_1"/>
<dbReference type="InParanoid" id="P97393"/>
<dbReference type="OMA" id="RIVKMRN"/>
<dbReference type="OrthoDB" id="9994905at2759"/>
<dbReference type="TreeFam" id="TF324451"/>
<dbReference type="Reactome" id="R-MMU-8980692">
    <property type="pathway name" value="RHOA GTPase cycle"/>
</dbReference>
<dbReference type="Reactome" id="R-MMU-9013026">
    <property type="pathway name" value="RHOB GTPase cycle"/>
</dbReference>
<dbReference type="Reactome" id="R-MMU-9013106">
    <property type="pathway name" value="RHOC GTPase cycle"/>
</dbReference>
<dbReference type="Reactome" id="R-MMU-9013148">
    <property type="pathway name" value="CDC42 GTPase cycle"/>
</dbReference>
<dbReference type="Reactome" id="R-MMU-9013149">
    <property type="pathway name" value="RAC1 GTPase cycle"/>
</dbReference>
<dbReference type="Reactome" id="R-MMU-9013405">
    <property type="pathway name" value="RHOD GTPase cycle"/>
</dbReference>
<dbReference type="Reactome" id="R-MMU-9013406">
    <property type="pathway name" value="RHOQ GTPase cycle"/>
</dbReference>
<dbReference type="Reactome" id="R-MMU-9013408">
    <property type="pathway name" value="RHOG GTPase cycle"/>
</dbReference>
<dbReference type="Reactome" id="R-MMU-9013409">
    <property type="pathway name" value="RHOJ GTPase cycle"/>
</dbReference>
<dbReference type="Reactome" id="R-MMU-9013423">
    <property type="pathway name" value="RAC3 GTPase cycle"/>
</dbReference>
<dbReference type="Reactome" id="R-MMU-9035034">
    <property type="pathway name" value="RHOF GTPase cycle"/>
</dbReference>
<dbReference type="Reactome" id="R-MMU-9696264">
    <property type="pathway name" value="RND3 GTPase cycle"/>
</dbReference>
<dbReference type="Reactome" id="R-MMU-9696270">
    <property type="pathway name" value="RND2 GTPase cycle"/>
</dbReference>
<dbReference type="Reactome" id="R-MMU-9696273">
    <property type="pathway name" value="RND1 GTPase cycle"/>
</dbReference>
<dbReference type="BioGRID-ORCS" id="11855">
    <property type="hits" value="3 hits in 76 CRISPR screens"/>
</dbReference>
<dbReference type="ChiTaRS" id="Arhgap5">
    <property type="organism name" value="mouse"/>
</dbReference>
<dbReference type="PRO" id="PR:P97393"/>
<dbReference type="Proteomes" id="UP000000589">
    <property type="component" value="Chromosome 12"/>
</dbReference>
<dbReference type="RNAct" id="P97393">
    <property type="molecule type" value="protein"/>
</dbReference>
<dbReference type="Bgee" id="ENSMUSG00000035133">
    <property type="expression patterns" value="Expressed in cerebellum lobe and 266 other cell types or tissues"/>
</dbReference>
<dbReference type="GO" id="GO:0005829">
    <property type="term" value="C:cytosol"/>
    <property type="evidence" value="ECO:0007669"/>
    <property type="project" value="Ensembl"/>
</dbReference>
<dbReference type="GO" id="GO:0005783">
    <property type="term" value="C:endoplasmic reticulum"/>
    <property type="evidence" value="ECO:0007669"/>
    <property type="project" value="Ensembl"/>
</dbReference>
<dbReference type="GO" id="GO:0005886">
    <property type="term" value="C:plasma membrane"/>
    <property type="evidence" value="ECO:0007669"/>
    <property type="project" value="UniProtKB-SubCell"/>
</dbReference>
<dbReference type="GO" id="GO:0005096">
    <property type="term" value="F:GTPase activator activity"/>
    <property type="evidence" value="ECO:0007669"/>
    <property type="project" value="UniProtKB-KW"/>
</dbReference>
<dbReference type="GO" id="GO:0042169">
    <property type="term" value="F:SH2 domain binding"/>
    <property type="evidence" value="ECO:0007669"/>
    <property type="project" value="Ensembl"/>
</dbReference>
<dbReference type="GO" id="GO:0016477">
    <property type="term" value="P:cell migration"/>
    <property type="evidence" value="ECO:0000315"/>
    <property type="project" value="MGI"/>
</dbReference>
<dbReference type="GO" id="GO:0010631">
    <property type="term" value="P:epithelial cell migration"/>
    <property type="evidence" value="ECO:0000315"/>
    <property type="project" value="MGI"/>
</dbReference>
<dbReference type="GO" id="GO:0030879">
    <property type="term" value="P:mammary gland development"/>
    <property type="evidence" value="ECO:0000315"/>
    <property type="project" value="MGI"/>
</dbReference>
<dbReference type="GO" id="GO:0010634">
    <property type="term" value="P:positive regulation of epithelial cell migration"/>
    <property type="evidence" value="ECO:0000315"/>
    <property type="project" value="MGI"/>
</dbReference>
<dbReference type="GO" id="GO:0002053">
    <property type="term" value="P:positive regulation of mesenchymal cell proliferation"/>
    <property type="evidence" value="ECO:0000315"/>
    <property type="project" value="MGI"/>
</dbReference>
<dbReference type="GO" id="GO:0008361">
    <property type="term" value="P:regulation of cell size"/>
    <property type="evidence" value="ECO:0000315"/>
    <property type="project" value="MGI"/>
</dbReference>
<dbReference type="GO" id="GO:0007165">
    <property type="term" value="P:signal transduction"/>
    <property type="evidence" value="ECO:0007669"/>
    <property type="project" value="InterPro"/>
</dbReference>
<dbReference type="CDD" id="cd22220">
    <property type="entry name" value="pseudoGTPaseD_p190RhoGAP-B"/>
    <property type="match status" value="1"/>
</dbReference>
<dbReference type="CDD" id="cd04373">
    <property type="entry name" value="RhoGAP_p190"/>
    <property type="match status" value="1"/>
</dbReference>
<dbReference type="FunFam" id="1.10.10.440:FF:000007">
    <property type="entry name" value="Putative rho GTPase-activating protein 5"/>
    <property type="match status" value="1"/>
</dbReference>
<dbReference type="FunFam" id="3.40.50.300:FF:000349">
    <property type="entry name" value="Rho GTPase-activating protein 5"/>
    <property type="match status" value="1"/>
</dbReference>
<dbReference type="FunFam" id="1.10.555.10:FF:000021">
    <property type="entry name" value="rho GTPase-activating protein 5"/>
    <property type="match status" value="1"/>
</dbReference>
<dbReference type="FunFam" id="1.10.10.440:FF:000014">
    <property type="entry name" value="rho GTPase-activating protein 5 isoform X1"/>
    <property type="match status" value="1"/>
</dbReference>
<dbReference type="Gene3D" id="1.10.10.440">
    <property type="entry name" value="FF domain"/>
    <property type="match status" value="2"/>
</dbReference>
<dbReference type="Gene3D" id="3.40.50.300">
    <property type="entry name" value="P-loop containing nucleotide triphosphate hydrolases"/>
    <property type="match status" value="1"/>
</dbReference>
<dbReference type="Gene3D" id="1.10.555.10">
    <property type="entry name" value="Rho GTPase activation protein"/>
    <property type="match status" value="1"/>
</dbReference>
<dbReference type="InterPro" id="IPR002713">
    <property type="entry name" value="FF_domain"/>
</dbReference>
<dbReference type="InterPro" id="IPR036517">
    <property type="entry name" value="FF_domain_sf"/>
</dbReference>
<dbReference type="InterPro" id="IPR027417">
    <property type="entry name" value="P-loop_NTPase"/>
</dbReference>
<dbReference type="InterPro" id="IPR039007">
    <property type="entry name" value="pG1"/>
</dbReference>
<dbReference type="InterPro" id="IPR051978">
    <property type="entry name" value="Rho-GAP_domain"/>
</dbReference>
<dbReference type="InterPro" id="IPR008936">
    <property type="entry name" value="Rho_GTPase_activation_prot"/>
</dbReference>
<dbReference type="InterPro" id="IPR032835">
    <property type="entry name" value="RhoGAP-FF1"/>
</dbReference>
<dbReference type="InterPro" id="IPR000198">
    <property type="entry name" value="RhoGAP_dom"/>
</dbReference>
<dbReference type="InterPro" id="IPR045786">
    <property type="entry name" value="RhoGAP_pG1_pG2"/>
</dbReference>
<dbReference type="InterPro" id="IPR039006">
    <property type="entry name" value="RhoGAP_pG2"/>
</dbReference>
<dbReference type="PANTHER" id="PTHR46005">
    <property type="entry name" value="RHO GTPASE-ACTIVATING PROTEIN 190"/>
    <property type="match status" value="1"/>
</dbReference>
<dbReference type="PANTHER" id="PTHR46005:SF2">
    <property type="entry name" value="RHO GTPASE-ACTIVATING PROTEIN 5"/>
    <property type="match status" value="1"/>
</dbReference>
<dbReference type="Pfam" id="PF01846">
    <property type="entry name" value="FF"/>
    <property type="match status" value="1"/>
</dbReference>
<dbReference type="Pfam" id="PF23083">
    <property type="entry name" value="FF_RHG35_4th"/>
    <property type="match status" value="1"/>
</dbReference>
<dbReference type="Pfam" id="PF00620">
    <property type="entry name" value="RhoGAP"/>
    <property type="match status" value="1"/>
</dbReference>
<dbReference type="Pfam" id="PF16512">
    <property type="entry name" value="RhoGAP-FF1"/>
    <property type="match status" value="1"/>
</dbReference>
<dbReference type="Pfam" id="PF19518">
    <property type="entry name" value="RhoGAP_pG1_pG2"/>
    <property type="match status" value="1"/>
</dbReference>
<dbReference type="PRINTS" id="PR00449">
    <property type="entry name" value="RASTRNSFRMNG"/>
</dbReference>
<dbReference type="SMART" id="SM00441">
    <property type="entry name" value="FF"/>
    <property type="match status" value="4"/>
</dbReference>
<dbReference type="SMART" id="SM00324">
    <property type="entry name" value="RhoGAP"/>
    <property type="match status" value="1"/>
</dbReference>
<dbReference type="SUPFAM" id="SSF81698">
    <property type="entry name" value="FF domain"/>
    <property type="match status" value="1"/>
</dbReference>
<dbReference type="SUPFAM" id="SSF48350">
    <property type="entry name" value="GTPase activation domain, GAP"/>
    <property type="match status" value="1"/>
</dbReference>
<dbReference type="SUPFAM" id="SSF52540">
    <property type="entry name" value="P-loop containing nucleoside triphosphate hydrolases"/>
    <property type="match status" value="1"/>
</dbReference>
<dbReference type="PROSITE" id="PS51676">
    <property type="entry name" value="FF"/>
    <property type="match status" value="4"/>
</dbReference>
<dbReference type="PROSITE" id="PS51852">
    <property type="entry name" value="PG1"/>
    <property type="match status" value="1"/>
</dbReference>
<dbReference type="PROSITE" id="PS51853">
    <property type="entry name" value="PG2"/>
    <property type="match status" value="1"/>
</dbReference>
<dbReference type="PROSITE" id="PS50238">
    <property type="entry name" value="RHOGAP"/>
    <property type="match status" value="1"/>
</dbReference>
<keyword id="KW-1003">Cell membrane</keyword>
<keyword id="KW-0963">Cytoplasm</keyword>
<keyword id="KW-0343">GTPase activation</keyword>
<keyword id="KW-0472">Membrane</keyword>
<keyword id="KW-0944">Nitration</keyword>
<keyword id="KW-0597">Phosphoprotein</keyword>
<keyword id="KW-1185">Reference proteome</keyword>
<keyword id="KW-0677">Repeat</keyword>
<reference key="1">
    <citation type="journal article" date="1998" name="Biochim. Biophys. Acta">
        <title>Cloning, genomic organization and chromosomal assignment of the mouse p190-B gene.</title>
        <authorList>
            <person name="Burbelo P.D."/>
            <person name="Finegold A.A."/>
            <person name="Kozak C.A."/>
            <person name="Yamada Y."/>
            <person name="Takami H."/>
        </authorList>
    </citation>
    <scope>NUCLEOTIDE SEQUENCE [GENOMIC DNA]</scope>
    <scope>TISSUE SPECIFICITY</scope>
    <source>
        <strain>129/SvJ</strain>
        <tissue>Kidney</tissue>
    </source>
</reference>
<reference key="2">
    <citation type="journal article" date="2009" name="PLoS Biol.">
        <title>Lineage-specific biology revealed by a finished genome assembly of the mouse.</title>
        <authorList>
            <person name="Church D.M."/>
            <person name="Goodstadt L."/>
            <person name="Hillier L.W."/>
            <person name="Zody M.C."/>
            <person name="Goldstein S."/>
            <person name="She X."/>
            <person name="Bult C.J."/>
            <person name="Agarwala R."/>
            <person name="Cherry J.L."/>
            <person name="DiCuccio M."/>
            <person name="Hlavina W."/>
            <person name="Kapustin Y."/>
            <person name="Meric P."/>
            <person name="Maglott D."/>
            <person name="Birtle Z."/>
            <person name="Marques A.C."/>
            <person name="Graves T."/>
            <person name="Zhou S."/>
            <person name="Teague B."/>
            <person name="Potamousis K."/>
            <person name="Churas C."/>
            <person name="Place M."/>
            <person name="Herschleb J."/>
            <person name="Runnheim R."/>
            <person name="Forrest D."/>
            <person name="Amos-Landgraf J."/>
            <person name="Schwartz D.C."/>
            <person name="Cheng Z."/>
            <person name="Lindblad-Toh K."/>
            <person name="Eichler E.E."/>
            <person name="Ponting C.P."/>
        </authorList>
    </citation>
    <scope>NUCLEOTIDE SEQUENCE [LARGE SCALE GENOMIC DNA]</scope>
    <source>
        <strain>C57BL/6J</strain>
    </source>
</reference>
<reference key="3">
    <citation type="journal article" date="2005" name="Science">
        <title>The transcriptional landscape of the mammalian genome.</title>
        <authorList>
            <person name="Carninci P."/>
            <person name="Kasukawa T."/>
            <person name="Katayama S."/>
            <person name="Gough J."/>
            <person name="Frith M.C."/>
            <person name="Maeda N."/>
            <person name="Oyama R."/>
            <person name="Ravasi T."/>
            <person name="Lenhard B."/>
            <person name="Wells C."/>
            <person name="Kodzius R."/>
            <person name="Shimokawa K."/>
            <person name="Bajic V.B."/>
            <person name="Brenner S.E."/>
            <person name="Batalov S."/>
            <person name="Forrest A.R."/>
            <person name="Zavolan M."/>
            <person name="Davis M.J."/>
            <person name="Wilming L.G."/>
            <person name="Aidinis V."/>
            <person name="Allen J.E."/>
            <person name="Ambesi-Impiombato A."/>
            <person name="Apweiler R."/>
            <person name="Aturaliya R.N."/>
            <person name="Bailey T.L."/>
            <person name="Bansal M."/>
            <person name="Baxter L."/>
            <person name="Beisel K.W."/>
            <person name="Bersano T."/>
            <person name="Bono H."/>
            <person name="Chalk A.M."/>
            <person name="Chiu K.P."/>
            <person name="Choudhary V."/>
            <person name="Christoffels A."/>
            <person name="Clutterbuck D.R."/>
            <person name="Crowe M.L."/>
            <person name="Dalla E."/>
            <person name="Dalrymple B.P."/>
            <person name="de Bono B."/>
            <person name="Della Gatta G."/>
            <person name="di Bernardo D."/>
            <person name="Down T."/>
            <person name="Engstrom P."/>
            <person name="Fagiolini M."/>
            <person name="Faulkner G."/>
            <person name="Fletcher C.F."/>
            <person name="Fukushima T."/>
            <person name="Furuno M."/>
            <person name="Futaki S."/>
            <person name="Gariboldi M."/>
            <person name="Georgii-Hemming P."/>
            <person name="Gingeras T.R."/>
            <person name="Gojobori T."/>
            <person name="Green R.E."/>
            <person name="Gustincich S."/>
            <person name="Harbers M."/>
            <person name="Hayashi Y."/>
            <person name="Hensch T.K."/>
            <person name="Hirokawa N."/>
            <person name="Hill D."/>
            <person name="Huminiecki L."/>
            <person name="Iacono M."/>
            <person name="Ikeo K."/>
            <person name="Iwama A."/>
            <person name="Ishikawa T."/>
            <person name="Jakt M."/>
            <person name="Kanapin A."/>
            <person name="Katoh M."/>
            <person name="Kawasawa Y."/>
            <person name="Kelso J."/>
            <person name="Kitamura H."/>
            <person name="Kitano H."/>
            <person name="Kollias G."/>
            <person name="Krishnan S.P."/>
            <person name="Kruger A."/>
            <person name="Kummerfeld S.K."/>
            <person name="Kurochkin I.V."/>
            <person name="Lareau L.F."/>
            <person name="Lazarevic D."/>
            <person name="Lipovich L."/>
            <person name="Liu J."/>
            <person name="Liuni S."/>
            <person name="McWilliam S."/>
            <person name="Madan Babu M."/>
            <person name="Madera M."/>
            <person name="Marchionni L."/>
            <person name="Matsuda H."/>
            <person name="Matsuzawa S."/>
            <person name="Miki H."/>
            <person name="Mignone F."/>
            <person name="Miyake S."/>
            <person name="Morris K."/>
            <person name="Mottagui-Tabar S."/>
            <person name="Mulder N."/>
            <person name="Nakano N."/>
            <person name="Nakauchi H."/>
            <person name="Ng P."/>
            <person name="Nilsson R."/>
            <person name="Nishiguchi S."/>
            <person name="Nishikawa S."/>
            <person name="Nori F."/>
            <person name="Ohara O."/>
            <person name="Okazaki Y."/>
            <person name="Orlando V."/>
            <person name="Pang K.C."/>
            <person name="Pavan W.J."/>
            <person name="Pavesi G."/>
            <person name="Pesole G."/>
            <person name="Petrovsky N."/>
            <person name="Piazza S."/>
            <person name="Reed J."/>
            <person name="Reid J.F."/>
            <person name="Ring B.Z."/>
            <person name="Ringwald M."/>
            <person name="Rost B."/>
            <person name="Ruan Y."/>
            <person name="Salzberg S.L."/>
            <person name="Sandelin A."/>
            <person name="Schneider C."/>
            <person name="Schoenbach C."/>
            <person name="Sekiguchi K."/>
            <person name="Semple C.A."/>
            <person name="Seno S."/>
            <person name="Sessa L."/>
            <person name="Sheng Y."/>
            <person name="Shibata Y."/>
            <person name="Shimada H."/>
            <person name="Shimada K."/>
            <person name="Silva D."/>
            <person name="Sinclair B."/>
            <person name="Sperling S."/>
            <person name="Stupka E."/>
            <person name="Sugiura K."/>
            <person name="Sultana R."/>
            <person name="Takenaka Y."/>
            <person name="Taki K."/>
            <person name="Tammoja K."/>
            <person name="Tan S.L."/>
            <person name="Tang S."/>
            <person name="Taylor M.S."/>
            <person name="Tegner J."/>
            <person name="Teichmann S.A."/>
            <person name="Ueda H.R."/>
            <person name="van Nimwegen E."/>
            <person name="Verardo R."/>
            <person name="Wei C.L."/>
            <person name="Yagi K."/>
            <person name="Yamanishi H."/>
            <person name="Zabarovsky E."/>
            <person name="Zhu S."/>
            <person name="Zimmer A."/>
            <person name="Hide W."/>
            <person name="Bult C."/>
            <person name="Grimmond S.M."/>
            <person name="Teasdale R.D."/>
            <person name="Liu E.T."/>
            <person name="Brusic V."/>
            <person name="Quackenbush J."/>
            <person name="Wahlestedt C."/>
            <person name="Mattick J.S."/>
            <person name="Hume D.A."/>
            <person name="Kai C."/>
            <person name="Sasaki D."/>
            <person name="Tomaru Y."/>
            <person name="Fukuda S."/>
            <person name="Kanamori-Katayama M."/>
            <person name="Suzuki M."/>
            <person name="Aoki J."/>
            <person name="Arakawa T."/>
            <person name="Iida J."/>
            <person name="Imamura K."/>
            <person name="Itoh M."/>
            <person name="Kato T."/>
            <person name="Kawaji H."/>
            <person name="Kawagashira N."/>
            <person name="Kawashima T."/>
            <person name="Kojima M."/>
            <person name="Kondo S."/>
            <person name="Konno H."/>
            <person name="Nakano K."/>
            <person name="Ninomiya N."/>
            <person name="Nishio T."/>
            <person name="Okada M."/>
            <person name="Plessy C."/>
            <person name="Shibata K."/>
            <person name="Shiraki T."/>
            <person name="Suzuki S."/>
            <person name="Tagami M."/>
            <person name="Waki K."/>
            <person name="Watahiki A."/>
            <person name="Okamura-Oho Y."/>
            <person name="Suzuki H."/>
            <person name="Kawai J."/>
            <person name="Hayashizaki Y."/>
        </authorList>
    </citation>
    <scope>NUCLEOTIDE SEQUENCE [LARGE SCALE MRNA] OF 1-1152</scope>
    <source>
        <strain>C57BL/6J</strain>
        <tissue>Aorta</tissue>
        <tissue>Vein</tissue>
    </source>
</reference>
<reference key="4">
    <citation type="journal article" date="2009" name="Immunity">
        <title>The phagosomal proteome in interferon-gamma-activated macrophages.</title>
        <authorList>
            <person name="Trost M."/>
            <person name="English L."/>
            <person name="Lemieux S."/>
            <person name="Courcelles M."/>
            <person name="Desjardins M."/>
            <person name="Thibault P."/>
        </authorList>
    </citation>
    <scope>IDENTIFICATION BY MASS SPECTROMETRY [LARGE SCALE ANALYSIS]</scope>
</reference>
<reference key="5">
    <citation type="journal article" date="2010" name="Cell">
        <title>A tissue-specific atlas of mouse protein phosphorylation and expression.</title>
        <authorList>
            <person name="Huttlin E.L."/>
            <person name="Jedrychowski M.P."/>
            <person name="Elias J.E."/>
            <person name="Goswami T."/>
            <person name="Rad R."/>
            <person name="Beausoleil S.A."/>
            <person name="Villen J."/>
            <person name="Haas W."/>
            <person name="Sowa M.E."/>
            <person name="Gygi S.P."/>
        </authorList>
    </citation>
    <scope>PHOSPHORYLATION [LARGE SCALE ANALYSIS] AT SER-1196; SER-1203 AND SER-1219</scope>
    <scope>IDENTIFICATION BY MASS SPECTROMETRY [LARGE SCALE ANALYSIS]</scope>
    <source>
        <tissue>Brain</tissue>
        <tissue>Heart</tissue>
        <tissue>Kidney</tissue>
        <tissue>Lung</tissue>
        <tissue>Pancreas</tissue>
        <tissue>Testis</tissue>
    </source>
</reference>
<feature type="chain" id="PRO_0000056703" description="Rho GTPase-activating protein 5">
    <location>
        <begin position="1"/>
        <end position="1503"/>
    </location>
</feature>
<feature type="domain" description="FF 1" evidence="3">
    <location>
        <begin position="267"/>
        <end position="325"/>
    </location>
</feature>
<feature type="domain" description="FF 2" evidence="3">
    <location>
        <begin position="366"/>
        <end position="420"/>
    </location>
</feature>
<feature type="domain" description="FF 3" evidence="3">
    <location>
        <begin position="427"/>
        <end position="481"/>
    </location>
</feature>
<feature type="domain" description="FF 4" evidence="3">
    <location>
        <begin position="482"/>
        <end position="548"/>
    </location>
</feature>
<feature type="domain" description="pG1 pseudoGTPase" evidence="4">
    <location>
        <begin position="590"/>
        <end position="763"/>
    </location>
</feature>
<feature type="domain" description="pG2 pseudoGTPase" evidence="5">
    <location>
        <begin position="779"/>
        <end position="944"/>
    </location>
</feature>
<feature type="domain" description="Rho-GAP" evidence="2">
    <location>
        <begin position="1263"/>
        <end position="1450"/>
    </location>
</feature>
<feature type="region of interest" description="Disordered" evidence="6">
    <location>
        <begin position="975"/>
        <end position="1004"/>
    </location>
</feature>
<feature type="region of interest" description="Disordered" evidence="6">
    <location>
        <begin position="1022"/>
        <end position="1050"/>
    </location>
</feature>
<feature type="region of interest" description="Disordered" evidence="6">
    <location>
        <begin position="1069"/>
        <end position="1091"/>
    </location>
</feature>
<feature type="region of interest" description="Disordered" evidence="6">
    <location>
        <begin position="1129"/>
        <end position="1157"/>
    </location>
</feature>
<feature type="region of interest" description="Disordered" evidence="6">
    <location>
        <begin position="1169"/>
        <end position="1255"/>
    </location>
</feature>
<feature type="compositionally biased region" description="Pro residues" evidence="6">
    <location>
        <begin position="1036"/>
        <end position="1045"/>
    </location>
</feature>
<feature type="compositionally biased region" description="Basic and acidic residues" evidence="6">
    <location>
        <begin position="1141"/>
        <end position="1151"/>
    </location>
</feature>
<feature type="site" description="Arginine finger; crucial for GTP hydrolysis by stabilizing the transition state" evidence="2">
    <location>
        <position position="1298"/>
    </location>
</feature>
<feature type="modified residue" description="3'-nitrotyrosine" evidence="1">
    <location>
        <position position="550"/>
    </location>
</feature>
<feature type="modified residue" description="Phosphoserine" evidence="1">
    <location>
        <position position="590"/>
    </location>
</feature>
<feature type="modified residue" description="Phosphoserine" evidence="1">
    <location>
        <position position="765"/>
    </location>
</feature>
<feature type="modified residue" description="Phosphoserine" evidence="1">
    <location>
        <position position="951"/>
    </location>
</feature>
<feature type="modified residue" description="Phosphoserine" evidence="1">
    <location>
        <position position="968"/>
    </location>
</feature>
<feature type="modified residue" description="Phosphoserine" evidence="1">
    <location>
        <position position="1115"/>
    </location>
</feature>
<feature type="modified residue" description="Phosphoserine" evidence="9">
    <location>
        <position position="1196"/>
    </location>
</feature>
<feature type="modified residue" description="Phosphoserine" evidence="9">
    <location>
        <position position="1203"/>
    </location>
</feature>
<feature type="modified residue" description="Phosphoserine" evidence="9">
    <location>
        <position position="1219"/>
    </location>
</feature>
<feature type="sequence conflict" description="In Ref. 1; AAD12768." evidence="8" ref="1">
    <original>HF</original>
    <variation>SL</variation>
    <location>
        <begin position="71"/>
        <end position="72"/>
    </location>
</feature>
<feature type="sequence conflict" description="In Ref. 1; AAD12768." evidence="8" ref="1">
    <original>I</original>
    <variation>N</variation>
    <location>
        <position position="93"/>
    </location>
</feature>
<feature type="sequence conflict" description="In Ref. 1; AAD12768." evidence="8" ref="1">
    <original>R</original>
    <variation>H</variation>
    <location>
        <position position="118"/>
    </location>
</feature>
<feature type="sequence conflict" description="In Ref. 1; AAD12768." evidence="8" ref="1">
    <original>TL</original>
    <variation>SV</variation>
    <location>
        <begin position="348"/>
        <end position="349"/>
    </location>
</feature>
<feature type="sequence conflict" description="In Ref. 1; AAD12768." evidence="8" ref="1">
    <original>N</original>
    <variation>K</variation>
    <location>
        <position position="416"/>
    </location>
</feature>
<feature type="sequence conflict" description="In Ref. 1; AAD12768." evidence="8" ref="1">
    <original>I</original>
    <variation>F</variation>
    <location>
        <position position="629"/>
    </location>
</feature>
<feature type="sequence conflict" description="In Ref. 1; AAD12768." evidence="8" ref="1">
    <location>
        <position position="681"/>
    </location>
</feature>
<feature type="sequence conflict" description="In Ref. 1; AAD12768." evidence="8" ref="1">
    <original>G</original>
    <variation>A</variation>
    <location>
        <position position="787"/>
    </location>
</feature>
<feature type="sequence conflict" description="In Ref. 1; AAD12768." evidence="8" ref="1">
    <original>D</original>
    <variation>H</variation>
    <location>
        <position position="793"/>
    </location>
</feature>
<feature type="sequence conflict" description="In Ref. 1; AAD12768." evidence="8" ref="1">
    <original>H</original>
    <variation>T</variation>
    <location>
        <position position="849"/>
    </location>
</feature>
<feature type="sequence conflict" description="In Ref. 1; AAD12768." evidence="8" ref="1">
    <original>LAH</original>
    <variation>FG</variation>
    <location>
        <begin position="1079"/>
        <end position="1081"/>
    </location>
</feature>
<feature type="sequence conflict" description="In Ref. 1; AAD12768." evidence="8" ref="1">
    <original>V</original>
    <variation>A</variation>
    <location>
        <position position="1092"/>
    </location>
</feature>
<feature type="sequence conflict" description="In Ref. 1; AAD12768." evidence="8" ref="1">
    <original>TSKGHGERRPSKYKYKSKTLFSKAKSYYRRTHSDASDDEAFTTSKT</original>
    <variation>PQKVMESVGLQNTNINLKLCLVKPSHTTEEHTQMQAMMRLSLLPKP</variation>
    <location>
        <begin position="1142"/>
        <end position="1187"/>
    </location>
</feature>
<feature type="sequence conflict" description="In Ref. 3; AK041016." evidence="8" ref="3">
    <original>S</original>
    <variation>P</variation>
    <location>
        <position position="1152"/>
    </location>
</feature>
<feature type="sequence conflict" description="In Ref. 1; AAD12768." evidence="8" ref="1">
    <original>WPT</original>
    <variation>GQP</variation>
    <location>
        <begin position="1415"/>
        <end position="1417"/>
    </location>
</feature>
<feature type="sequence conflict" description="In Ref. 1; AAD12768." evidence="8" ref="1">
    <original>P</original>
    <variation>Q</variation>
    <location>
        <position position="1465"/>
    </location>
</feature>
<name>RHG05_MOUSE</name>
<accession>P97393</accession>
<accession>E9PYT0</accession>
<accession>E9Q0L8</accession>
<sequence>MMAKNKEPRPPSYTVSVVGLSGTEKDKGNCGVGKSCLCNRFVRSKADEYYPEHTSVLSTIDFGGRVVNNDHFLYWGDITQNGEDGVECKIHVIEQTEFIDDQTFLPHRSTNLQPYIKRAAASKLQSAEKLMYICTDQLGLEQDFEQKQMPEGKLNVDGFLLCIDVSQGCNRKFDDQLKFVNNLFVQLSKSKKPVIIAATKCDECVDHYLREVQAFASNKKNLLVVETSARFNVNIETCFTALVQMLDKTRGKPKIIPYLDAYKTQRQLVVTATDKFEKLVQTVRDYHATWKTVSNKLKNHPDYEEYINLEGTRKARNTFSKHIEQLKQEHIRKRREEYISTLPRAFNTLLPDLEEIEHLNWLEALKLMEKRADFQLCFVVLEKTPWDETDHIDKINDRRIPFDLLSTLEAEKVYQNHVQHLISEKRRIEMKEKFKKTLEKIQFISPGQPWEEVMCFVMEDEAFKYITEADSKEVYGRHQREIVEKAKEEFQEMLFEHSELFYDLDLNATPSSDKMSEIHTVLSEEPRYKALQKLAPDRESLLLKHIGFVYHPTKETCLSGQYCTDIKVENLLATSLLEMDHNRVRLYHDSTNIDKVNLFILGKDGLAQELANEIRTQSTDDEYALDGKIYELDLRPVDAKSPYILSQLWTAAFKPHGCFCVFNSIESLSFIGEFIGKIRTEASQIRKDKYMTNLPFTLILANQRDSISKNLPILRHQGQQLANKLQCPFVDVPTGTYPRKFNESQIKQALRGVLESVKHNLDVVSPVPINKDVSEADLRIVMCAMCGDPFSVDLILSPFLDSHSCSAAQAGQNNSLMLDKIIGEKRRRIQITILSYHSSIGVRKDELVHGYILVYSAKRKASMGMLRAFLSEVQDTIPVQLVAVTDSQADFFENEAIKELMTEGEHIATEITAKFTALYSLSQYHRQTEVFTLFFSDVLEKKNMIENSYLSDNTRESTHQSEDVFLPSPRDCFPYNNYPDSDDDTEAPPPYSPIGDDVQLLPTPSDRSRYRLDLEGNEYPVHSTPNCHDHERNHKVPPPIKPKPVVPKTNVKKLDPNLLKTIEAGIGKNPRKQTSRVPLAHPEDMDSSDNYVEPLDTIFKQKGYSDEIYVVPDDSQNRIIKIRNSFVNNTQGDEENGFSDRTSKGHGERRPSKYKYKSKTLFSKAKSYYRRTHSDASDDEAFTTSKTKRKGRHRGSEEDPLLSPVETWKGGIDNPAITSDQEVDDKKIKKKTHKVKEDKKQKKKTKTFNPPTRRNWESNYFGMPLQDLVTAEKPIPLFVEKCVEFIEDTGLCTEGLYRVSGNKTDQDNIQKQFDQDHNINLASMEVTVNAVAGALKAFFADLPDPLIPYSLHPELLEAAKIPDKTERFHALKEIVKKFHPVNYDVFRYVITHLNRVSQQNKINLMTADNLSICFWPTLMRPDFENREFLSTTKIHQSVVETFIQQCQFFFYNGEIVETANTVAPPPTSNPGQLVESMVPLQLPPPLQPQLIQPQLQTDPLGII</sequence>
<gene>
    <name type="primary">Arhgap5</name>
    <name type="synonym">Rhogap5</name>
</gene>
<protein>
    <recommendedName>
        <fullName>Rho GTPase-activating protein 5</fullName>
    </recommendedName>
    <alternativeName>
        <fullName>Rho-type GTPase-activating protein 5</fullName>
    </alternativeName>
    <alternativeName>
        <fullName>p190-B</fullName>
    </alternativeName>
</protein>
<evidence type="ECO:0000250" key="1">
    <source>
        <dbReference type="UniProtKB" id="Q13017"/>
    </source>
</evidence>
<evidence type="ECO:0000255" key="2">
    <source>
        <dbReference type="PROSITE-ProRule" id="PRU00172"/>
    </source>
</evidence>
<evidence type="ECO:0000255" key="3">
    <source>
        <dbReference type="PROSITE-ProRule" id="PRU01013"/>
    </source>
</evidence>
<evidence type="ECO:0000255" key="4">
    <source>
        <dbReference type="PROSITE-ProRule" id="PRU01199"/>
    </source>
</evidence>
<evidence type="ECO:0000255" key="5">
    <source>
        <dbReference type="PROSITE-ProRule" id="PRU01200"/>
    </source>
</evidence>
<evidence type="ECO:0000256" key="6">
    <source>
        <dbReference type="SAM" id="MobiDB-lite"/>
    </source>
</evidence>
<evidence type="ECO:0000269" key="7">
    <source>
    </source>
</evidence>
<evidence type="ECO:0000305" key="8"/>
<evidence type="ECO:0007744" key="9">
    <source>
    </source>
</evidence>
<proteinExistence type="evidence at protein level"/>